<organism>
    <name type="scientific">Escherichia coli (strain ATCC 8739 / DSM 1576 / NBRC 3972 / NCIMB 8545 / WDCM 00012 / Crooks)</name>
    <dbReference type="NCBI Taxonomy" id="481805"/>
    <lineage>
        <taxon>Bacteria</taxon>
        <taxon>Pseudomonadati</taxon>
        <taxon>Pseudomonadota</taxon>
        <taxon>Gammaproteobacteria</taxon>
        <taxon>Enterobacterales</taxon>
        <taxon>Enterobacteriaceae</taxon>
        <taxon>Escherichia</taxon>
    </lineage>
</organism>
<dbReference type="EC" id="1.2.1.70" evidence="1"/>
<dbReference type="EMBL" id="CP000946">
    <property type="protein sequence ID" value="ACA78050.1"/>
    <property type="molecule type" value="Genomic_DNA"/>
</dbReference>
<dbReference type="RefSeq" id="WP_001295619.1">
    <property type="nucleotide sequence ID" value="NZ_MTFT01000016.1"/>
</dbReference>
<dbReference type="SMR" id="B1IU83"/>
<dbReference type="KEGG" id="ecl:EcolC_2416"/>
<dbReference type="HOGENOM" id="CLU_035113_2_2_6"/>
<dbReference type="UniPathway" id="UPA00251">
    <property type="reaction ID" value="UER00316"/>
</dbReference>
<dbReference type="GO" id="GO:0008883">
    <property type="term" value="F:glutamyl-tRNA reductase activity"/>
    <property type="evidence" value="ECO:0007669"/>
    <property type="project" value="UniProtKB-UniRule"/>
</dbReference>
<dbReference type="GO" id="GO:0050661">
    <property type="term" value="F:NADP binding"/>
    <property type="evidence" value="ECO:0007669"/>
    <property type="project" value="InterPro"/>
</dbReference>
<dbReference type="GO" id="GO:0019353">
    <property type="term" value="P:protoporphyrinogen IX biosynthetic process from glutamate"/>
    <property type="evidence" value="ECO:0007669"/>
    <property type="project" value="TreeGrafter"/>
</dbReference>
<dbReference type="CDD" id="cd05213">
    <property type="entry name" value="NAD_bind_Glutamyl_tRNA_reduct"/>
    <property type="match status" value="1"/>
</dbReference>
<dbReference type="FunFam" id="3.30.460.30:FF:000001">
    <property type="entry name" value="Glutamyl-tRNA reductase"/>
    <property type="match status" value="1"/>
</dbReference>
<dbReference type="FunFam" id="3.40.50.720:FF:000031">
    <property type="entry name" value="Glutamyl-tRNA reductase"/>
    <property type="match status" value="1"/>
</dbReference>
<dbReference type="Gene3D" id="3.30.460.30">
    <property type="entry name" value="Glutamyl-tRNA reductase, N-terminal domain"/>
    <property type="match status" value="1"/>
</dbReference>
<dbReference type="Gene3D" id="3.40.50.720">
    <property type="entry name" value="NAD(P)-binding Rossmann-like Domain"/>
    <property type="match status" value="1"/>
</dbReference>
<dbReference type="HAMAP" id="MF_00087">
    <property type="entry name" value="Glu_tRNA_reductase"/>
    <property type="match status" value="1"/>
</dbReference>
<dbReference type="InterPro" id="IPR000343">
    <property type="entry name" value="4pyrrol_synth_GluRdtase"/>
</dbReference>
<dbReference type="InterPro" id="IPR015896">
    <property type="entry name" value="4pyrrol_synth_GluRdtase_dimer"/>
</dbReference>
<dbReference type="InterPro" id="IPR015895">
    <property type="entry name" value="4pyrrol_synth_GluRdtase_N"/>
</dbReference>
<dbReference type="InterPro" id="IPR018214">
    <property type="entry name" value="GluRdtase_CS"/>
</dbReference>
<dbReference type="InterPro" id="IPR036453">
    <property type="entry name" value="GluRdtase_dimer_dom_sf"/>
</dbReference>
<dbReference type="InterPro" id="IPR036343">
    <property type="entry name" value="GluRdtase_N_sf"/>
</dbReference>
<dbReference type="InterPro" id="IPR036291">
    <property type="entry name" value="NAD(P)-bd_dom_sf"/>
</dbReference>
<dbReference type="InterPro" id="IPR006151">
    <property type="entry name" value="Shikm_DH/Glu-tRNA_Rdtase"/>
</dbReference>
<dbReference type="NCBIfam" id="TIGR01035">
    <property type="entry name" value="hemA"/>
    <property type="match status" value="1"/>
</dbReference>
<dbReference type="PANTHER" id="PTHR43013">
    <property type="entry name" value="GLUTAMYL-TRNA REDUCTASE"/>
    <property type="match status" value="1"/>
</dbReference>
<dbReference type="PANTHER" id="PTHR43013:SF1">
    <property type="entry name" value="GLUTAMYL-TRNA REDUCTASE"/>
    <property type="match status" value="1"/>
</dbReference>
<dbReference type="Pfam" id="PF00745">
    <property type="entry name" value="GlutR_dimer"/>
    <property type="match status" value="1"/>
</dbReference>
<dbReference type="Pfam" id="PF05201">
    <property type="entry name" value="GlutR_N"/>
    <property type="match status" value="1"/>
</dbReference>
<dbReference type="Pfam" id="PF01488">
    <property type="entry name" value="Shikimate_DH"/>
    <property type="match status" value="1"/>
</dbReference>
<dbReference type="PIRSF" id="PIRSF000445">
    <property type="entry name" value="4pyrrol_synth_GluRdtase"/>
    <property type="match status" value="1"/>
</dbReference>
<dbReference type="SUPFAM" id="SSF69742">
    <property type="entry name" value="Glutamyl tRNA-reductase catalytic, N-terminal domain"/>
    <property type="match status" value="1"/>
</dbReference>
<dbReference type="SUPFAM" id="SSF69075">
    <property type="entry name" value="Glutamyl tRNA-reductase dimerization domain"/>
    <property type="match status" value="1"/>
</dbReference>
<dbReference type="SUPFAM" id="SSF51735">
    <property type="entry name" value="NAD(P)-binding Rossmann-fold domains"/>
    <property type="match status" value="1"/>
</dbReference>
<dbReference type="PROSITE" id="PS00747">
    <property type="entry name" value="GLUTR"/>
    <property type="match status" value="1"/>
</dbReference>
<accession>B1IU83</accession>
<proteinExistence type="inferred from homology"/>
<protein>
    <recommendedName>
        <fullName evidence="1">Glutamyl-tRNA reductase</fullName>
        <shortName evidence="1">GluTR</shortName>
        <ecNumber evidence="1">1.2.1.70</ecNumber>
    </recommendedName>
</protein>
<reference key="1">
    <citation type="submission" date="2008-02" db="EMBL/GenBank/DDBJ databases">
        <title>Complete sequence of Escherichia coli C str. ATCC 8739.</title>
        <authorList>
            <person name="Copeland A."/>
            <person name="Lucas S."/>
            <person name="Lapidus A."/>
            <person name="Glavina del Rio T."/>
            <person name="Dalin E."/>
            <person name="Tice H."/>
            <person name="Bruce D."/>
            <person name="Goodwin L."/>
            <person name="Pitluck S."/>
            <person name="Kiss H."/>
            <person name="Brettin T."/>
            <person name="Detter J.C."/>
            <person name="Han C."/>
            <person name="Kuske C.R."/>
            <person name="Schmutz J."/>
            <person name="Larimer F."/>
            <person name="Land M."/>
            <person name="Hauser L."/>
            <person name="Kyrpides N."/>
            <person name="Mikhailova N."/>
            <person name="Ingram L."/>
            <person name="Richardson P."/>
        </authorList>
    </citation>
    <scope>NUCLEOTIDE SEQUENCE [LARGE SCALE GENOMIC DNA]</scope>
    <source>
        <strain>ATCC 8739 / DSM 1576 / NBRC 3972 / NCIMB 8545 / WDCM 00012 / Crooks</strain>
    </source>
</reference>
<gene>
    <name evidence="1" type="primary">hemA</name>
    <name type="ordered locus">EcolC_2416</name>
</gene>
<name>HEM1_ECOLC</name>
<evidence type="ECO:0000255" key="1">
    <source>
        <dbReference type="HAMAP-Rule" id="MF_00087"/>
    </source>
</evidence>
<feature type="chain" id="PRO_1000075408" description="Glutamyl-tRNA reductase">
    <location>
        <begin position="1"/>
        <end position="418"/>
    </location>
</feature>
<feature type="active site" description="Nucleophile" evidence="1">
    <location>
        <position position="50"/>
    </location>
</feature>
<feature type="binding site" evidence="1">
    <location>
        <begin position="49"/>
        <end position="52"/>
    </location>
    <ligand>
        <name>substrate</name>
    </ligand>
</feature>
<feature type="binding site" evidence="1">
    <location>
        <position position="109"/>
    </location>
    <ligand>
        <name>substrate</name>
    </ligand>
</feature>
<feature type="binding site" evidence="1">
    <location>
        <begin position="114"/>
        <end position="116"/>
    </location>
    <ligand>
        <name>substrate</name>
    </ligand>
</feature>
<feature type="binding site" evidence="1">
    <location>
        <position position="120"/>
    </location>
    <ligand>
        <name>substrate</name>
    </ligand>
</feature>
<feature type="binding site" evidence="1">
    <location>
        <begin position="189"/>
        <end position="194"/>
    </location>
    <ligand>
        <name>NADP(+)</name>
        <dbReference type="ChEBI" id="CHEBI:58349"/>
    </ligand>
</feature>
<feature type="site" description="Important for activity" evidence="1">
    <location>
        <position position="99"/>
    </location>
</feature>
<comment type="function">
    <text evidence="1">Catalyzes the NADPH-dependent reduction of glutamyl-tRNA(Glu) to glutamate 1-semialdehyde (GSA).</text>
</comment>
<comment type="catalytic activity">
    <reaction evidence="1">
        <text>(S)-4-amino-5-oxopentanoate + tRNA(Glu) + NADP(+) = L-glutamyl-tRNA(Glu) + NADPH + H(+)</text>
        <dbReference type="Rhea" id="RHEA:12344"/>
        <dbReference type="Rhea" id="RHEA-COMP:9663"/>
        <dbReference type="Rhea" id="RHEA-COMP:9680"/>
        <dbReference type="ChEBI" id="CHEBI:15378"/>
        <dbReference type="ChEBI" id="CHEBI:57501"/>
        <dbReference type="ChEBI" id="CHEBI:57783"/>
        <dbReference type="ChEBI" id="CHEBI:58349"/>
        <dbReference type="ChEBI" id="CHEBI:78442"/>
        <dbReference type="ChEBI" id="CHEBI:78520"/>
        <dbReference type="EC" id="1.2.1.70"/>
    </reaction>
</comment>
<comment type="pathway">
    <text evidence="1">Porphyrin-containing compound metabolism; protoporphyrin-IX biosynthesis; 5-aminolevulinate from L-glutamyl-tRNA(Glu): step 1/2.</text>
</comment>
<comment type="subunit">
    <text evidence="1">Homodimer.</text>
</comment>
<comment type="domain">
    <text evidence="1">Possesses an unusual extended V-shaped dimeric structure with each monomer consisting of three distinct domains arranged along a curved 'spinal' alpha-helix. The N-terminal catalytic domain specifically recognizes the glutamate moiety of the substrate. The second domain is the NADPH-binding domain, and the third C-terminal domain is responsible for dimerization.</text>
</comment>
<comment type="miscellaneous">
    <text evidence="1">During catalysis, the active site Cys acts as a nucleophile attacking the alpha-carbonyl group of tRNA-bound glutamate with the formation of a thioester intermediate between enzyme and glutamate, and the concomitant release of tRNA(Glu). The thioester intermediate is finally reduced by direct hydride transfer from NADPH, to form the product GSA.</text>
</comment>
<comment type="similarity">
    <text evidence="1">Belongs to the glutamyl-tRNA reductase family.</text>
</comment>
<sequence length="418" mass="46321">MTLLALGINHKTAPVSLRERVSFSPDKLDQALDSLLAQPMVQGGVVLSTCNRTELYLSVEEQDNLQEALIRWLCDYHNLNEEDLRKSLYWHQDNDAVSHLMRVASGLDSLVLGEPQILGQVKKAFADSQKGHMKASELERMFQKSFSVAKRVRTETDIGASAVSVAFAACTLARQIFESLSTVTVLLVGAGETIELVARHLREHKVQKMIIANRTRERAQILADEVGAEVIALSEIDERLREADIIISSTASPLPIIGKGMVERALKSRRNQPMLLVDIAVPRDVEPEVGKLANAYLYSVDDLQSIISHNLAQRKAAAVEAETIVAQETSEFMAWLRAQSASETIREYRSQAEQVRDELTAKALAALEQGGDAQAIMQDLAWKLTNRLIHAPTKSLQQAARDGDNERLNILRDSLGLE</sequence>
<keyword id="KW-0521">NADP</keyword>
<keyword id="KW-0560">Oxidoreductase</keyword>
<keyword id="KW-0627">Porphyrin biosynthesis</keyword>